<accession>Q3T073</accession>
<evidence type="ECO:0000250" key="1">
    <source>
        <dbReference type="UniProtKB" id="Q9R2C1"/>
    </source>
</evidence>
<evidence type="ECO:0000255" key="2"/>
<evidence type="ECO:0000305" key="3"/>
<dbReference type="EMBL" id="BC102539">
    <property type="protein sequence ID" value="AAI02540.1"/>
    <property type="molecule type" value="mRNA"/>
</dbReference>
<dbReference type="RefSeq" id="NP_001107193.1">
    <property type="nucleotide sequence ID" value="NM_001113721.1"/>
</dbReference>
<dbReference type="SMR" id="Q3T073"/>
<dbReference type="FunCoup" id="Q3T073">
    <property type="interactions" value="1226"/>
</dbReference>
<dbReference type="STRING" id="9913.ENSBTAP00000057917"/>
<dbReference type="GeneID" id="613627"/>
<dbReference type="KEGG" id="bta:613627"/>
<dbReference type="CTD" id="387923"/>
<dbReference type="VEuPathDB" id="HostDB:ENSBTAG00000051524"/>
<dbReference type="InParanoid" id="Q3T073"/>
<dbReference type="OMA" id="ATKFITQ"/>
<dbReference type="OrthoDB" id="16679at2759"/>
<dbReference type="Proteomes" id="UP000009136">
    <property type="component" value="Chromosome 12"/>
</dbReference>
<dbReference type="Bgee" id="ENSBTAG00000051524">
    <property type="expression patterns" value="Expressed in semen and 85 other cell types or tissues"/>
</dbReference>
<dbReference type="GO" id="GO:0005783">
    <property type="term" value="C:endoplasmic reticulum"/>
    <property type="evidence" value="ECO:0000318"/>
    <property type="project" value="GO_Central"/>
</dbReference>
<dbReference type="GO" id="GO:0005789">
    <property type="term" value="C:endoplasmic reticulum membrane"/>
    <property type="evidence" value="ECO:0007669"/>
    <property type="project" value="UniProtKB-SubCell"/>
</dbReference>
<dbReference type="GO" id="GO:0030968">
    <property type="term" value="P:endoplasmic reticulum unfolded protein response"/>
    <property type="evidence" value="ECO:0000318"/>
    <property type="project" value="GO_Central"/>
</dbReference>
<dbReference type="InterPro" id="IPR010580">
    <property type="entry name" value="ER_stress-assoc"/>
</dbReference>
<dbReference type="PANTHER" id="PTHR15601">
    <property type="entry name" value="STRESS ASSOCIATED ENDOPLASMIC RETICULUM PROTEIN SERP1/RAMP4"/>
    <property type="match status" value="1"/>
</dbReference>
<dbReference type="PANTHER" id="PTHR15601:SF20">
    <property type="entry name" value="STRESS-ASSOCIATED ENDOPLASMIC RETICULUM PROTEIN 2"/>
    <property type="match status" value="1"/>
</dbReference>
<dbReference type="Pfam" id="PF06624">
    <property type="entry name" value="RAMP4"/>
    <property type="match status" value="1"/>
</dbReference>
<comment type="function">
    <text evidence="1">Interacts with target proteins during their translocation into the lumen of the endoplasmic reticulum. Protects unfolded target proteins against degradation during ER stress. May facilitate glycosylation of target proteins after termination of ER stress. May modulate the use of N-glycosylation sites on target proteins.</text>
</comment>
<comment type="subunit">
    <text evidence="1">Interacts with SEC61B, SEC61A1 and the SEC61 complex. Interacts with CANX.</text>
</comment>
<comment type="subcellular location">
    <subcellularLocation>
        <location evidence="1">Membrane</location>
        <topology evidence="1">Single-pass membrane protein</topology>
    </subcellularLocation>
    <subcellularLocation>
        <location evidence="1">Endoplasmic reticulum membrane</location>
        <topology evidence="1">Single-pass membrane protein</topology>
    </subcellularLocation>
</comment>
<comment type="similarity">
    <text evidence="3">Belongs to the RAMP4 family.</text>
</comment>
<organism>
    <name type="scientific">Bos taurus</name>
    <name type="common">Bovine</name>
    <dbReference type="NCBI Taxonomy" id="9913"/>
    <lineage>
        <taxon>Eukaryota</taxon>
        <taxon>Metazoa</taxon>
        <taxon>Chordata</taxon>
        <taxon>Craniata</taxon>
        <taxon>Vertebrata</taxon>
        <taxon>Euteleostomi</taxon>
        <taxon>Mammalia</taxon>
        <taxon>Eutheria</taxon>
        <taxon>Laurasiatheria</taxon>
        <taxon>Artiodactyla</taxon>
        <taxon>Ruminantia</taxon>
        <taxon>Pecora</taxon>
        <taxon>Bovidae</taxon>
        <taxon>Bovinae</taxon>
        <taxon>Bos</taxon>
    </lineage>
</organism>
<proteinExistence type="inferred from homology"/>
<name>SERP2_BOVIN</name>
<gene>
    <name type="primary">SERP2</name>
</gene>
<keyword id="KW-0256">Endoplasmic reticulum</keyword>
<keyword id="KW-0472">Membrane</keyword>
<keyword id="KW-1185">Reference proteome</keyword>
<keyword id="KW-0812">Transmembrane</keyword>
<keyword id="KW-1133">Transmembrane helix</keyword>
<keyword id="KW-0834">Unfolded protein response</keyword>
<feature type="chain" id="PRO_0000274798" description="Stress-associated endoplasmic reticulum protein 2">
    <location>
        <begin position="1"/>
        <end position="65"/>
    </location>
</feature>
<feature type="transmembrane region" description="Helical" evidence="2">
    <location>
        <begin position="38"/>
        <end position="58"/>
    </location>
</feature>
<reference key="1">
    <citation type="submission" date="2005-08" db="EMBL/GenBank/DDBJ databases">
        <authorList>
            <consortium name="NIH - Mammalian Gene Collection (MGC) project"/>
        </authorList>
    </citation>
    <scope>NUCLEOTIDE SEQUENCE [LARGE SCALE MRNA]</scope>
    <source>
        <strain>Crossbred X Angus</strain>
        <tissue>Liver</tissue>
    </source>
</reference>
<sequence length="65" mass="7431">MVAKQRIRMANEKHSKNITQRGNVAKTLRPQEEKYPVGPWLLALFVFVVCGSAIFQIIQSIRMGM</sequence>
<protein>
    <recommendedName>
        <fullName>Stress-associated endoplasmic reticulum protein 2</fullName>
    </recommendedName>
    <alternativeName>
        <fullName>Ribosome-associated membrane protein RAMP4-2</fullName>
    </alternativeName>
</protein>